<dbReference type="EMBL" id="CP000993">
    <property type="protein sequence ID" value="ACH94382.1"/>
    <property type="molecule type" value="Genomic_DNA"/>
</dbReference>
<dbReference type="RefSeq" id="WP_012538676.1">
    <property type="nucleotide sequence ID" value="NC_011244.1"/>
</dbReference>
<dbReference type="SMR" id="B5RQU8"/>
<dbReference type="KEGG" id="bre:BRE_125"/>
<dbReference type="HOGENOM" id="CLU_040318_1_3_12"/>
<dbReference type="Proteomes" id="UP000000612">
    <property type="component" value="Chromosome"/>
</dbReference>
<dbReference type="GO" id="GO:0022627">
    <property type="term" value="C:cytosolic small ribosomal subunit"/>
    <property type="evidence" value="ECO:0007669"/>
    <property type="project" value="TreeGrafter"/>
</dbReference>
<dbReference type="GO" id="GO:0003735">
    <property type="term" value="F:structural constituent of ribosome"/>
    <property type="evidence" value="ECO:0007669"/>
    <property type="project" value="InterPro"/>
</dbReference>
<dbReference type="GO" id="GO:0006412">
    <property type="term" value="P:translation"/>
    <property type="evidence" value="ECO:0007669"/>
    <property type="project" value="UniProtKB-UniRule"/>
</dbReference>
<dbReference type="CDD" id="cd01425">
    <property type="entry name" value="RPS2"/>
    <property type="match status" value="1"/>
</dbReference>
<dbReference type="FunFam" id="1.10.287.610:FF:000001">
    <property type="entry name" value="30S ribosomal protein S2"/>
    <property type="match status" value="1"/>
</dbReference>
<dbReference type="Gene3D" id="3.40.50.10490">
    <property type="entry name" value="Glucose-6-phosphate isomerase like protein, domain 1"/>
    <property type="match status" value="1"/>
</dbReference>
<dbReference type="Gene3D" id="1.10.287.610">
    <property type="entry name" value="Helix hairpin bin"/>
    <property type="match status" value="1"/>
</dbReference>
<dbReference type="HAMAP" id="MF_00291_B">
    <property type="entry name" value="Ribosomal_uS2_B"/>
    <property type="match status" value="1"/>
</dbReference>
<dbReference type="InterPro" id="IPR001865">
    <property type="entry name" value="Ribosomal_uS2"/>
</dbReference>
<dbReference type="InterPro" id="IPR005706">
    <property type="entry name" value="Ribosomal_uS2_bac/mit/plastid"/>
</dbReference>
<dbReference type="InterPro" id="IPR018130">
    <property type="entry name" value="Ribosomal_uS2_CS"/>
</dbReference>
<dbReference type="InterPro" id="IPR023591">
    <property type="entry name" value="Ribosomal_uS2_flav_dom_sf"/>
</dbReference>
<dbReference type="NCBIfam" id="TIGR01011">
    <property type="entry name" value="rpsB_bact"/>
    <property type="match status" value="1"/>
</dbReference>
<dbReference type="PANTHER" id="PTHR12534">
    <property type="entry name" value="30S RIBOSOMAL PROTEIN S2 PROKARYOTIC AND ORGANELLAR"/>
    <property type="match status" value="1"/>
</dbReference>
<dbReference type="PANTHER" id="PTHR12534:SF0">
    <property type="entry name" value="SMALL RIBOSOMAL SUBUNIT PROTEIN US2M"/>
    <property type="match status" value="1"/>
</dbReference>
<dbReference type="Pfam" id="PF00318">
    <property type="entry name" value="Ribosomal_S2"/>
    <property type="match status" value="1"/>
</dbReference>
<dbReference type="PRINTS" id="PR00395">
    <property type="entry name" value="RIBOSOMALS2"/>
</dbReference>
<dbReference type="SUPFAM" id="SSF52313">
    <property type="entry name" value="Ribosomal protein S2"/>
    <property type="match status" value="1"/>
</dbReference>
<dbReference type="PROSITE" id="PS00962">
    <property type="entry name" value="RIBOSOMAL_S2_1"/>
    <property type="match status" value="1"/>
</dbReference>
<name>RS2_BORRA</name>
<sequence length="254" mass="28864">MAVITMKSLLEAGVHFGHQVKRLDPRMKRFIFSERNEIHILDLQKTLQGIKDSYELVQSVIKNGKKVLFVGTKKQASEIIEQEAKRSEMPYVNNRWLGGMLSNFNTIKKSVQKLKKLEKMEVDGTFEMISKKEVSQINREKLKLAKNLTGIKDMEELPGAIFIIDPKREQIVINEARKLGITIIAVVDTNCNPDVIDCPIPGNDDAIRSVALFTKIISDAILESDKEVGIQIVENLNEEDLMSEIEVKNERKES</sequence>
<proteinExistence type="inferred from homology"/>
<feature type="chain" id="PRO_1000114995" description="Small ribosomal subunit protein uS2">
    <location>
        <begin position="1"/>
        <end position="254"/>
    </location>
</feature>
<keyword id="KW-0687">Ribonucleoprotein</keyword>
<keyword id="KW-0689">Ribosomal protein</keyword>
<organism>
    <name type="scientific">Borrelia recurrentis (strain A1)</name>
    <dbReference type="NCBI Taxonomy" id="412418"/>
    <lineage>
        <taxon>Bacteria</taxon>
        <taxon>Pseudomonadati</taxon>
        <taxon>Spirochaetota</taxon>
        <taxon>Spirochaetia</taxon>
        <taxon>Spirochaetales</taxon>
        <taxon>Borreliaceae</taxon>
        <taxon>Borrelia</taxon>
    </lineage>
</organism>
<accession>B5RQU8</accession>
<evidence type="ECO:0000255" key="1">
    <source>
        <dbReference type="HAMAP-Rule" id="MF_00291"/>
    </source>
</evidence>
<evidence type="ECO:0000305" key="2"/>
<gene>
    <name evidence="1" type="primary">rpsB</name>
    <name type="ordered locus">BRE_125</name>
</gene>
<reference key="1">
    <citation type="journal article" date="2008" name="PLoS Genet.">
        <title>The genome of Borrelia recurrentis, the agent of deadly louse-borne relapsing fever, is a degraded subset of tick-borne Borrelia duttonii.</title>
        <authorList>
            <person name="Lescot M."/>
            <person name="Audic S."/>
            <person name="Robert C."/>
            <person name="Nguyen T.T."/>
            <person name="Blanc G."/>
            <person name="Cutler S.J."/>
            <person name="Wincker P."/>
            <person name="Couloux A."/>
            <person name="Claverie J.-M."/>
            <person name="Raoult D."/>
            <person name="Drancourt M."/>
        </authorList>
    </citation>
    <scope>NUCLEOTIDE SEQUENCE [LARGE SCALE GENOMIC DNA]</scope>
    <source>
        <strain>A1</strain>
    </source>
</reference>
<comment type="similarity">
    <text evidence="1">Belongs to the universal ribosomal protein uS2 family.</text>
</comment>
<protein>
    <recommendedName>
        <fullName evidence="1">Small ribosomal subunit protein uS2</fullName>
    </recommendedName>
    <alternativeName>
        <fullName evidence="2">30S ribosomal protein S2</fullName>
    </alternativeName>
</protein>